<reference key="1">
    <citation type="journal article" date="2003" name="J. Bacteriol.">
        <title>Genetic and biochemical characterization of the F-ATPase operon from Streptococcus sanguis 10904.</title>
        <authorList>
            <person name="Kuhnert W.L."/>
            <person name="Quivey R.G. Jr."/>
        </authorList>
    </citation>
    <scope>NUCLEOTIDE SEQUENCE [GENOMIC DNA]</scope>
    <source>
        <strain>10904</strain>
    </source>
</reference>
<protein>
    <recommendedName>
        <fullName evidence="1">ATP synthase epsilon chain</fullName>
    </recommendedName>
    <alternativeName>
        <fullName evidence="1">ATP synthase F1 sector epsilon subunit</fullName>
    </alternativeName>
    <alternativeName>
        <fullName evidence="1">F-ATPase epsilon subunit</fullName>
    </alternativeName>
</protein>
<proteinExistence type="inferred from homology"/>
<keyword id="KW-0066">ATP synthesis</keyword>
<keyword id="KW-1003">Cell membrane</keyword>
<keyword id="KW-0139">CF(1)</keyword>
<keyword id="KW-0375">Hydrogen ion transport</keyword>
<keyword id="KW-0406">Ion transport</keyword>
<keyword id="KW-0472">Membrane</keyword>
<keyword id="KW-0813">Transport</keyword>
<feature type="chain" id="PRO_0000188223" description="ATP synthase epsilon chain">
    <location>
        <begin position="1"/>
        <end position="139"/>
    </location>
</feature>
<comment type="function">
    <text evidence="1">Produces ATP from ADP in the presence of a proton gradient across the membrane.</text>
</comment>
<comment type="subunit">
    <text>F-type ATPases have 2 components, CF(1) - the catalytic core - and CF(0) - the membrane proton channel. CF(1) has five subunits: alpha(3), beta(3), gamma(1), delta(1), epsilon(1). CF(0) has three main subunits: a, b and c.</text>
</comment>
<comment type="subcellular location">
    <subcellularLocation>
        <location evidence="1">Cell membrane</location>
        <topology evidence="1">Peripheral membrane protein</topology>
    </subcellularLocation>
</comment>
<comment type="similarity">
    <text evidence="1">Belongs to the ATPase epsilon chain family.</text>
</comment>
<gene>
    <name evidence="1" type="primary">atpC</name>
    <name type="synonym">uncC</name>
</gene>
<sequence>MAQMTVQIVTPDGLIYDHHAAFVSVKTIDGELGILPRHINTIAVLEVDQVKVRRVDDDKHIDWIAVNGGIIEIADNVITIVADSAERARDIDISRAERAKRRAELEIEEAHDKHLIDQERRAKIALQRAINRINVGTRI</sequence>
<accession>Q9ZJ00</accession>
<name>ATPE_STRSA</name>
<dbReference type="EMBL" id="AF001955">
    <property type="protein sequence ID" value="AAD00919.1"/>
    <property type="molecule type" value="Genomic_DNA"/>
</dbReference>
<dbReference type="SMR" id="Q9ZJ00"/>
<dbReference type="GO" id="GO:0005886">
    <property type="term" value="C:plasma membrane"/>
    <property type="evidence" value="ECO:0007669"/>
    <property type="project" value="UniProtKB-SubCell"/>
</dbReference>
<dbReference type="GO" id="GO:0045259">
    <property type="term" value="C:proton-transporting ATP synthase complex"/>
    <property type="evidence" value="ECO:0007669"/>
    <property type="project" value="UniProtKB-KW"/>
</dbReference>
<dbReference type="GO" id="GO:0005524">
    <property type="term" value="F:ATP binding"/>
    <property type="evidence" value="ECO:0007669"/>
    <property type="project" value="UniProtKB-UniRule"/>
</dbReference>
<dbReference type="GO" id="GO:0046933">
    <property type="term" value="F:proton-transporting ATP synthase activity, rotational mechanism"/>
    <property type="evidence" value="ECO:0007669"/>
    <property type="project" value="UniProtKB-UniRule"/>
</dbReference>
<dbReference type="CDD" id="cd12152">
    <property type="entry name" value="F1-ATPase_delta"/>
    <property type="match status" value="1"/>
</dbReference>
<dbReference type="FunFam" id="1.20.5.440:FF:000001">
    <property type="entry name" value="ATP synthase epsilon chain"/>
    <property type="match status" value="1"/>
</dbReference>
<dbReference type="Gene3D" id="1.20.5.440">
    <property type="entry name" value="ATP synthase delta/epsilon subunit, C-terminal domain"/>
    <property type="match status" value="1"/>
</dbReference>
<dbReference type="Gene3D" id="2.60.15.10">
    <property type="entry name" value="F0F1 ATP synthase delta/epsilon subunit, N-terminal"/>
    <property type="match status" value="1"/>
</dbReference>
<dbReference type="HAMAP" id="MF_00530">
    <property type="entry name" value="ATP_synth_epsil_bac"/>
    <property type="match status" value="1"/>
</dbReference>
<dbReference type="InterPro" id="IPR001469">
    <property type="entry name" value="ATP_synth_F1_dsu/esu"/>
</dbReference>
<dbReference type="InterPro" id="IPR020546">
    <property type="entry name" value="ATP_synth_F1_dsu/esu_N"/>
</dbReference>
<dbReference type="InterPro" id="IPR020547">
    <property type="entry name" value="ATP_synth_F1_esu_C"/>
</dbReference>
<dbReference type="InterPro" id="IPR036771">
    <property type="entry name" value="ATPsynth_dsu/esu_N"/>
</dbReference>
<dbReference type="NCBIfam" id="TIGR01216">
    <property type="entry name" value="ATP_synt_epsi"/>
    <property type="match status" value="1"/>
</dbReference>
<dbReference type="NCBIfam" id="NF001846">
    <property type="entry name" value="PRK00571.1-3"/>
    <property type="match status" value="1"/>
</dbReference>
<dbReference type="PANTHER" id="PTHR13822">
    <property type="entry name" value="ATP SYNTHASE DELTA/EPSILON CHAIN"/>
    <property type="match status" value="1"/>
</dbReference>
<dbReference type="PANTHER" id="PTHR13822:SF10">
    <property type="entry name" value="ATP SYNTHASE EPSILON CHAIN, CHLOROPLASTIC"/>
    <property type="match status" value="1"/>
</dbReference>
<dbReference type="Pfam" id="PF00401">
    <property type="entry name" value="ATP-synt_DE"/>
    <property type="match status" value="1"/>
</dbReference>
<dbReference type="Pfam" id="PF02823">
    <property type="entry name" value="ATP-synt_DE_N"/>
    <property type="match status" value="1"/>
</dbReference>
<dbReference type="SUPFAM" id="SSF51344">
    <property type="entry name" value="Epsilon subunit of F1F0-ATP synthase N-terminal domain"/>
    <property type="match status" value="1"/>
</dbReference>
<evidence type="ECO:0000255" key="1">
    <source>
        <dbReference type="HAMAP-Rule" id="MF_00530"/>
    </source>
</evidence>
<organism>
    <name type="scientific">Streptococcus sanguinis</name>
    <dbReference type="NCBI Taxonomy" id="1305"/>
    <lineage>
        <taxon>Bacteria</taxon>
        <taxon>Bacillati</taxon>
        <taxon>Bacillota</taxon>
        <taxon>Bacilli</taxon>
        <taxon>Lactobacillales</taxon>
        <taxon>Streptococcaceae</taxon>
        <taxon>Streptococcus</taxon>
    </lineage>
</organism>